<gene>
    <name evidence="34" type="primary">PKP2</name>
</gene>
<dbReference type="EMBL" id="X97675">
    <property type="protein sequence ID" value="CAA66264.1"/>
    <property type="molecule type" value="mRNA"/>
</dbReference>
<dbReference type="EMBL" id="X97675">
    <property type="protein sequence ID" value="CAA66265.1"/>
    <property type="molecule type" value="mRNA"/>
</dbReference>
<dbReference type="EMBL" id="EU492903">
    <property type="protein sequence ID" value="ACD03459.1"/>
    <property type="molecule type" value="Genomic_DNA"/>
</dbReference>
<dbReference type="EMBL" id="EU520483">
    <property type="protein sequence ID" value="ACD13292.1"/>
    <property type="molecule type" value="mRNA"/>
</dbReference>
<dbReference type="EMBL" id="EU520484">
    <property type="protein sequence ID" value="ACD13293.1"/>
    <property type="molecule type" value="mRNA"/>
</dbReference>
<dbReference type="EMBL" id="AC087311">
    <property type="status" value="NOT_ANNOTATED_CDS"/>
    <property type="molecule type" value="Genomic_DNA"/>
</dbReference>
<dbReference type="EMBL" id="AC087588">
    <property type="status" value="NOT_ANNOTATED_CDS"/>
    <property type="molecule type" value="Genomic_DNA"/>
</dbReference>
<dbReference type="EMBL" id="CH471116">
    <property type="protein sequence ID" value="EAW88511.1"/>
    <property type="molecule type" value="Genomic_DNA"/>
</dbReference>
<dbReference type="EMBL" id="CH471116">
    <property type="protein sequence ID" value="EAW88514.1"/>
    <property type="molecule type" value="Genomic_DNA"/>
</dbReference>
<dbReference type="EMBL" id="CH471116">
    <property type="protein sequence ID" value="EAW88515.1"/>
    <property type="molecule type" value="Genomic_DNA"/>
</dbReference>
<dbReference type="EMBL" id="BC094762">
    <property type="protein sequence ID" value="AAH94762.1"/>
    <property type="molecule type" value="mRNA"/>
</dbReference>
<dbReference type="EMBL" id="BC126199">
    <property type="protein sequence ID" value="AAI26200.1"/>
    <property type="molecule type" value="mRNA"/>
</dbReference>
<dbReference type="EMBL" id="BC143966">
    <property type="protein sequence ID" value="AAI43967.1"/>
    <property type="molecule type" value="mRNA"/>
</dbReference>
<dbReference type="CCDS" id="CCDS31771.1">
    <molecule id="Q99959-2"/>
</dbReference>
<dbReference type="CCDS" id="CCDS8731.1">
    <molecule id="Q99959-1"/>
</dbReference>
<dbReference type="RefSeq" id="NP_001005242.2">
    <molecule id="Q99959-2"/>
    <property type="nucleotide sequence ID" value="NM_001005242.3"/>
</dbReference>
<dbReference type="RefSeq" id="NP_004563.2">
    <molecule id="Q99959-1"/>
    <property type="nucleotide sequence ID" value="NM_004572.4"/>
</dbReference>
<dbReference type="PDB" id="3TT9">
    <property type="method" value="X-ray"/>
    <property type="resolution" value="1.55 A"/>
    <property type="chains" value="A=346-620"/>
</dbReference>
<dbReference type="PDBsum" id="3TT9"/>
<dbReference type="SMR" id="Q99959"/>
<dbReference type="BioGRID" id="111335">
    <property type="interactions" value="272"/>
</dbReference>
<dbReference type="FunCoup" id="Q99959">
    <property type="interactions" value="1303"/>
</dbReference>
<dbReference type="IntAct" id="Q99959">
    <property type="interactions" value="128"/>
</dbReference>
<dbReference type="MINT" id="Q99959"/>
<dbReference type="STRING" id="9606.ENSP00000070846"/>
<dbReference type="GlyGen" id="Q99959">
    <property type="glycosylation" value="2 sites, 1 N-linked glycan (1 site), 1 O-linked glycan (1 site)"/>
</dbReference>
<dbReference type="iPTMnet" id="Q99959"/>
<dbReference type="PhosphoSitePlus" id="Q99959"/>
<dbReference type="SwissPalm" id="Q99959"/>
<dbReference type="BioMuta" id="PKP2"/>
<dbReference type="DMDM" id="296452867"/>
<dbReference type="jPOST" id="Q99959"/>
<dbReference type="MassIVE" id="Q99959"/>
<dbReference type="PaxDb" id="9606-ENSP00000070846"/>
<dbReference type="PeptideAtlas" id="Q99959"/>
<dbReference type="ProteomicsDB" id="78543">
    <molecule id="Q99959-1"/>
</dbReference>
<dbReference type="ProteomicsDB" id="78544">
    <molecule id="Q99959-2"/>
</dbReference>
<dbReference type="Antibodypedia" id="1963">
    <property type="antibodies" value="328 antibodies from 33 providers"/>
</dbReference>
<dbReference type="DNASU" id="5318"/>
<dbReference type="Ensembl" id="ENST00000070846.11">
    <molecule id="Q99959-1"/>
    <property type="protein sequence ID" value="ENSP00000070846.6"/>
    <property type="gene ID" value="ENSG00000057294.19"/>
</dbReference>
<dbReference type="Ensembl" id="ENST00000340811.9">
    <molecule id="Q99959-2"/>
    <property type="protein sequence ID" value="ENSP00000342800.5"/>
    <property type="gene ID" value="ENSG00000057294.19"/>
</dbReference>
<dbReference type="GeneID" id="5318"/>
<dbReference type="KEGG" id="hsa:5318"/>
<dbReference type="MANE-Select" id="ENST00000340811.9">
    <molecule id="Q99959-2"/>
    <property type="protein sequence ID" value="ENSP00000342800.5"/>
    <property type="RefSeq nucleotide sequence ID" value="NM_001005242.3"/>
    <property type="RefSeq protein sequence ID" value="NP_001005242.2"/>
</dbReference>
<dbReference type="UCSC" id="uc001rlj.5">
    <molecule id="Q99959-1"/>
    <property type="organism name" value="human"/>
</dbReference>
<dbReference type="AGR" id="HGNC:9024"/>
<dbReference type="CTD" id="5318"/>
<dbReference type="DisGeNET" id="5318"/>
<dbReference type="GeneCards" id="PKP2"/>
<dbReference type="GeneReviews" id="PKP2"/>
<dbReference type="HGNC" id="HGNC:9024">
    <property type="gene designation" value="PKP2"/>
</dbReference>
<dbReference type="HPA" id="ENSG00000057294">
    <property type="expression patterns" value="Tissue enhanced (heart)"/>
</dbReference>
<dbReference type="MalaCards" id="PKP2"/>
<dbReference type="MIM" id="602861">
    <property type="type" value="gene"/>
</dbReference>
<dbReference type="MIM" id="609040">
    <property type="type" value="phenotype"/>
</dbReference>
<dbReference type="neXtProt" id="NX_Q99959"/>
<dbReference type="OpenTargets" id="ENSG00000057294"/>
<dbReference type="Orphanet" id="130">
    <property type="disease" value="Brugada syndrome"/>
</dbReference>
<dbReference type="Orphanet" id="293888">
    <property type="disease" value="Inherited isolated arrhythmogenic cardiomyopathy, dominant-left variant"/>
</dbReference>
<dbReference type="Orphanet" id="293910">
    <property type="disease" value="Inherited isolated arrhythmogenic cardiomyopathy, dominant-right variant"/>
</dbReference>
<dbReference type="Orphanet" id="293899">
    <property type="disease" value="Inherited isolated arrhythmogenic ventricular dysplasia, biventricular variant"/>
</dbReference>
<dbReference type="Orphanet" id="54260">
    <property type="disease" value="Left ventricular noncompaction"/>
</dbReference>
<dbReference type="PharmGKB" id="PA33357"/>
<dbReference type="VEuPathDB" id="HostDB:ENSG00000057294"/>
<dbReference type="eggNOG" id="KOG1048">
    <property type="taxonomic scope" value="Eukaryota"/>
</dbReference>
<dbReference type="GeneTree" id="ENSGT00940000158677"/>
<dbReference type="HOGENOM" id="CLU_009111_3_0_1"/>
<dbReference type="InParanoid" id="Q99959"/>
<dbReference type="OMA" id="MNDSNMF"/>
<dbReference type="OrthoDB" id="3245100at2759"/>
<dbReference type="PAN-GO" id="Q99959">
    <property type="GO annotations" value="18 GO annotations based on evolutionary models"/>
</dbReference>
<dbReference type="PhylomeDB" id="Q99959"/>
<dbReference type="TreeFam" id="TF321877"/>
<dbReference type="PathwayCommons" id="Q99959"/>
<dbReference type="Reactome" id="R-HSA-6805567">
    <property type="pathway name" value="Keratinization"/>
</dbReference>
<dbReference type="Reactome" id="R-HSA-6809371">
    <property type="pathway name" value="Formation of the cornified envelope"/>
</dbReference>
<dbReference type="SignaLink" id="Q99959"/>
<dbReference type="SIGNOR" id="Q99959"/>
<dbReference type="BioGRID-ORCS" id="5318">
    <property type="hits" value="13 hits in 1172 CRISPR screens"/>
</dbReference>
<dbReference type="CD-CODE" id="DEE660B4">
    <property type="entry name" value="Stress granule"/>
</dbReference>
<dbReference type="ChiTaRS" id="PKP2">
    <property type="organism name" value="human"/>
</dbReference>
<dbReference type="EvolutionaryTrace" id="Q99959"/>
<dbReference type="GeneWiki" id="PKP2"/>
<dbReference type="GenomeRNAi" id="5318"/>
<dbReference type="Pharos" id="Q99959">
    <property type="development level" value="Tbio"/>
</dbReference>
<dbReference type="PRO" id="PR:Q99959"/>
<dbReference type="Proteomes" id="UP000005640">
    <property type="component" value="Chromosome 12"/>
</dbReference>
<dbReference type="RNAct" id="Q99959">
    <property type="molecule type" value="protein"/>
</dbReference>
<dbReference type="Bgee" id="ENSG00000057294">
    <property type="expression patterns" value="Expressed in heart right ventricle and 154 other cell types or tissues"/>
</dbReference>
<dbReference type="ExpressionAtlas" id="Q99959">
    <property type="expression patterns" value="baseline and differential"/>
</dbReference>
<dbReference type="GO" id="GO:0005912">
    <property type="term" value="C:adherens junction"/>
    <property type="evidence" value="ECO:0000318"/>
    <property type="project" value="GO_Central"/>
</dbReference>
<dbReference type="GO" id="GO:0030054">
    <property type="term" value="C:cell junction"/>
    <property type="evidence" value="ECO:0000314"/>
    <property type="project" value="HPA"/>
</dbReference>
<dbReference type="GO" id="GO:0051286">
    <property type="term" value="C:cell tip"/>
    <property type="evidence" value="ECO:0007669"/>
    <property type="project" value="GOC"/>
</dbReference>
<dbReference type="GO" id="GO:0005911">
    <property type="term" value="C:cell-cell junction"/>
    <property type="evidence" value="ECO:0000314"/>
    <property type="project" value="UniProtKB"/>
</dbReference>
<dbReference type="GO" id="GO:0001533">
    <property type="term" value="C:cornified envelope"/>
    <property type="evidence" value="ECO:0000304"/>
    <property type="project" value="Reactome"/>
</dbReference>
<dbReference type="GO" id="GO:0005737">
    <property type="term" value="C:cytoplasm"/>
    <property type="evidence" value="ECO:0000314"/>
    <property type="project" value="UniProtKB"/>
</dbReference>
<dbReference type="GO" id="GO:0030057">
    <property type="term" value="C:desmosome"/>
    <property type="evidence" value="ECO:0000314"/>
    <property type="project" value="UniProtKB"/>
</dbReference>
<dbReference type="GO" id="GO:0014704">
    <property type="term" value="C:intercalated disc"/>
    <property type="evidence" value="ECO:0000314"/>
    <property type="project" value="BHF-UCL"/>
</dbReference>
<dbReference type="GO" id="GO:0005882">
    <property type="term" value="C:intermediate filament"/>
    <property type="evidence" value="ECO:0000250"/>
    <property type="project" value="BHF-UCL"/>
</dbReference>
<dbReference type="GO" id="GO:0016020">
    <property type="term" value="C:membrane"/>
    <property type="evidence" value="ECO:0000304"/>
    <property type="project" value="ProtInc"/>
</dbReference>
<dbReference type="GO" id="GO:0005654">
    <property type="term" value="C:nucleoplasm"/>
    <property type="evidence" value="ECO:0000314"/>
    <property type="project" value="HPA"/>
</dbReference>
<dbReference type="GO" id="GO:0005634">
    <property type="term" value="C:nucleus"/>
    <property type="evidence" value="ECO:0000314"/>
    <property type="project" value="UniProtKB"/>
</dbReference>
<dbReference type="GO" id="GO:0005886">
    <property type="term" value="C:plasma membrane"/>
    <property type="evidence" value="ECO:0000314"/>
    <property type="project" value="UniProtKB"/>
</dbReference>
<dbReference type="GO" id="GO:0045294">
    <property type="term" value="F:alpha-catenin binding"/>
    <property type="evidence" value="ECO:0000353"/>
    <property type="project" value="BHF-UCL"/>
</dbReference>
<dbReference type="GO" id="GO:0045296">
    <property type="term" value="F:cadherin binding"/>
    <property type="evidence" value="ECO:0007005"/>
    <property type="project" value="BHF-UCL"/>
</dbReference>
<dbReference type="GO" id="GO:0086083">
    <property type="term" value="F:cell adhesive protein binding involved in bundle of His cell-Purkinje myocyte communication"/>
    <property type="evidence" value="ECO:0000305"/>
    <property type="project" value="BHF-UCL"/>
</dbReference>
<dbReference type="GO" id="GO:0003677">
    <property type="term" value="F:DNA binding"/>
    <property type="evidence" value="ECO:0000314"/>
    <property type="project" value="UniProtKB"/>
</dbReference>
<dbReference type="GO" id="GO:0019215">
    <property type="term" value="F:intermediate filament binding"/>
    <property type="evidence" value="ECO:0000314"/>
    <property type="project" value="BHF-UCL"/>
</dbReference>
<dbReference type="GO" id="GO:0060090">
    <property type="term" value="F:molecular adaptor activity"/>
    <property type="evidence" value="ECO:0000315"/>
    <property type="project" value="BHF-UCL"/>
</dbReference>
<dbReference type="GO" id="GO:0005080">
    <property type="term" value="F:protein kinase C binding"/>
    <property type="evidence" value="ECO:0000353"/>
    <property type="project" value="BHF-UCL"/>
</dbReference>
<dbReference type="GO" id="GO:0017080">
    <property type="term" value="F:sodium channel regulator activity"/>
    <property type="evidence" value="ECO:0000250"/>
    <property type="project" value="BHF-UCL"/>
</dbReference>
<dbReference type="GO" id="GO:0044325">
    <property type="term" value="F:transmembrane transporter binding"/>
    <property type="evidence" value="ECO:0000250"/>
    <property type="project" value="BHF-UCL"/>
</dbReference>
<dbReference type="GO" id="GO:0086073">
    <property type="term" value="P:bundle of His cell-Purkinje myocyte adhesion involved in cell communication"/>
    <property type="evidence" value="ECO:0000315"/>
    <property type="project" value="BHF-UCL"/>
</dbReference>
<dbReference type="GO" id="GO:0086002">
    <property type="term" value="P:cardiac muscle cell action potential involved in contraction"/>
    <property type="evidence" value="ECO:0000315"/>
    <property type="project" value="BHF-UCL"/>
</dbReference>
<dbReference type="GO" id="GO:0086064">
    <property type="term" value="P:cell communication by electrical coupling involved in cardiac conduction"/>
    <property type="evidence" value="ECO:0000250"/>
    <property type="project" value="BHF-UCL"/>
</dbReference>
<dbReference type="GO" id="GO:0098609">
    <property type="term" value="P:cell-cell adhesion"/>
    <property type="evidence" value="ECO:0000250"/>
    <property type="project" value="BHF-UCL"/>
</dbReference>
<dbReference type="GO" id="GO:0007267">
    <property type="term" value="P:cell-cell signaling"/>
    <property type="evidence" value="ECO:0000315"/>
    <property type="project" value="BHF-UCL"/>
</dbReference>
<dbReference type="GO" id="GO:0002159">
    <property type="term" value="P:desmosome assembly"/>
    <property type="evidence" value="ECO:0000315"/>
    <property type="project" value="BHF-UCL"/>
</dbReference>
<dbReference type="GO" id="GO:0002934">
    <property type="term" value="P:desmosome organization"/>
    <property type="evidence" value="ECO:0000318"/>
    <property type="project" value="GO_Central"/>
</dbReference>
<dbReference type="GO" id="GO:0007507">
    <property type="term" value="P:heart development"/>
    <property type="evidence" value="ECO:0000250"/>
    <property type="project" value="BHF-UCL"/>
</dbReference>
<dbReference type="GO" id="GO:0045110">
    <property type="term" value="P:intermediate filament bundle assembly"/>
    <property type="evidence" value="ECO:0000315"/>
    <property type="project" value="BHF-UCL"/>
</dbReference>
<dbReference type="GO" id="GO:0048496">
    <property type="term" value="P:maintenance of animal organ identity"/>
    <property type="evidence" value="ECO:0000315"/>
    <property type="project" value="BHF-UCL"/>
</dbReference>
<dbReference type="GO" id="GO:0099017">
    <property type="term" value="P:maintenance of protein localization at cell tip"/>
    <property type="evidence" value="ECO:0000250"/>
    <property type="project" value="UniProtKB"/>
</dbReference>
<dbReference type="GO" id="GO:0010765">
    <property type="term" value="P:positive regulation of sodium ion transport"/>
    <property type="evidence" value="ECO:0000250"/>
    <property type="project" value="BHF-UCL"/>
</dbReference>
<dbReference type="GO" id="GO:0072659">
    <property type="term" value="P:protein localization to plasma membrane"/>
    <property type="evidence" value="ECO:0000315"/>
    <property type="project" value="BHF-UCL"/>
</dbReference>
<dbReference type="GO" id="GO:0010810">
    <property type="term" value="P:regulation of cell-substrate adhesion"/>
    <property type="evidence" value="ECO:0000315"/>
    <property type="project" value="UniProtKB"/>
</dbReference>
<dbReference type="GO" id="GO:0086091">
    <property type="term" value="P:regulation of heart rate by cardiac conduction"/>
    <property type="evidence" value="ECO:0000315"/>
    <property type="project" value="BHF-UCL"/>
</dbReference>
<dbReference type="GO" id="GO:1900024">
    <property type="term" value="P:regulation of substrate adhesion-dependent cell spreading"/>
    <property type="evidence" value="ECO:0000315"/>
    <property type="project" value="UniProtKB"/>
</dbReference>
<dbReference type="GO" id="GO:0098911">
    <property type="term" value="P:regulation of ventricular cardiac muscle cell action potential"/>
    <property type="evidence" value="ECO:0000315"/>
    <property type="project" value="BHF-UCL"/>
</dbReference>
<dbReference type="GO" id="GO:0086005">
    <property type="term" value="P:ventricular cardiac muscle cell action potential"/>
    <property type="evidence" value="ECO:0000315"/>
    <property type="project" value="BHF-UCL"/>
</dbReference>
<dbReference type="GO" id="GO:0055010">
    <property type="term" value="P:ventricular cardiac muscle tissue morphogenesis"/>
    <property type="evidence" value="ECO:0000315"/>
    <property type="project" value="BHF-UCL"/>
</dbReference>
<dbReference type="Gene3D" id="1.25.10.10">
    <property type="entry name" value="Leucine-rich Repeat Variant"/>
    <property type="match status" value="1"/>
</dbReference>
<dbReference type="InterPro" id="IPR011989">
    <property type="entry name" value="ARM-like"/>
</dbReference>
<dbReference type="InterPro" id="IPR016024">
    <property type="entry name" value="ARM-type_fold"/>
</dbReference>
<dbReference type="InterPro" id="IPR000225">
    <property type="entry name" value="Armadillo"/>
</dbReference>
<dbReference type="InterPro" id="IPR028435">
    <property type="entry name" value="Plakophilin/d_Catenin"/>
</dbReference>
<dbReference type="PANTHER" id="PTHR10372:SF25">
    <property type="entry name" value="PLAKOPHILIN-2"/>
    <property type="match status" value="1"/>
</dbReference>
<dbReference type="PANTHER" id="PTHR10372">
    <property type="entry name" value="PLAKOPHILLIN-RELATED"/>
    <property type="match status" value="1"/>
</dbReference>
<dbReference type="Pfam" id="PF00514">
    <property type="entry name" value="Arm"/>
    <property type="match status" value="2"/>
</dbReference>
<dbReference type="SMART" id="SM00185">
    <property type="entry name" value="ARM"/>
    <property type="match status" value="5"/>
</dbReference>
<dbReference type="SUPFAM" id="SSF48371">
    <property type="entry name" value="ARM repeat"/>
    <property type="match status" value="1"/>
</dbReference>
<dbReference type="PROSITE" id="PS50176">
    <property type="entry name" value="ARM_REPEAT"/>
    <property type="match status" value="1"/>
</dbReference>
<evidence type="ECO:0000250" key="1">
    <source>
        <dbReference type="UniProtKB" id="F1M7L9"/>
    </source>
</evidence>
<evidence type="ECO:0000250" key="2">
    <source>
        <dbReference type="UniProtKB" id="Q9CQ73"/>
    </source>
</evidence>
<evidence type="ECO:0000256" key="3">
    <source>
        <dbReference type="SAM" id="MobiDB-lite"/>
    </source>
</evidence>
<evidence type="ECO:0000269" key="4">
    <source>
    </source>
</evidence>
<evidence type="ECO:0000269" key="5">
    <source>
    </source>
</evidence>
<evidence type="ECO:0000269" key="6">
    <source>
    </source>
</evidence>
<evidence type="ECO:0000269" key="7">
    <source>
    </source>
</evidence>
<evidence type="ECO:0000269" key="8">
    <source>
    </source>
</evidence>
<evidence type="ECO:0000269" key="9">
    <source>
    </source>
</evidence>
<evidence type="ECO:0000269" key="10">
    <source>
    </source>
</evidence>
<evidence type="ECO:0000269" key="11">
    <source>
    </source>
</evidence>
<evidence type="ECO:0000269" key="12">
    <source>
    </source>
</evidence>
<evidence type="ECO:0000269" key="13">
    <source>
    </source>
</evidence>
<evidence type="ECO:0000269" key="14">
    <source>
    </source>
</evidence>
<evidence type="ECO:0000269" key="15">
    <source>
    </source>
</evidence>
<evidence type="ECO:0000269" key="16">
    <source>
    </source>
</evidence>
<evidence type="ECO:0000269" key="17">
    <source>
    </source>
</evidence>
<evidence type="ECO:0000269" key="18">
    <source>
    </source>
</evidence>
<evidence type="ECO:0000269" key="19">
    <source>
    </source>
</evidence>
<evidence type="ECO:0000269" key="20">
    <source>
    </source>
</evidence>
<evidence type="ECO:0000269" key="21">
    <source>
    </source>
</evidence>
<evidence type="ECO:0000269" key="22">
    <source>
    </source>
</evidence>
<evidence type="ECO:0000269" key="23">
    <source>
    </source>
</evidence>
<evidence type="ECO:0000269" key="24">
    <source>
    </source>
</evidence>
<evidence type="ECO:0000269" key="25">
    <source>
    </source>
</evidence>
<evidence type="ECO:0000269" key="26">
    <source>
    </source>
</evidence>
<evidence type="ECO:0000269" key="27">
    <source>
    </source>
</evidence>
<evidence type="ECO:0000269" key="28">
    <source>
    </source>
</evidence>
<evidence type="ECO:0000269" key="29">
    <source>
    </source>
</evidence>
<evidence type="ECO:0000269" key="30">
    <source ref="2"/>
</evidence>
<evidence type="ECO:0000303" key="31">
    <source>
    </source>
</evidence>
<evidence type="ECO:0000303" key="32">
    <source>
    </source>
</evidence>
<evidence type="ECO:0000305" key="33"/>
<evidence type="ECO:0000312" key="34">
    <source>
        <dbReference type="HGNC" id="HGNC:9024"/>
    </source>
</evidence>
<evidence type="ECO:0007744" key="35">
    <source>
    </source>
</evidence>
<evidence type="ECO:0007744" key="36">
    <source>
    </source>
</evidence>
<evidence type="ECO:0007744" key="37">
    <source>
    </source>
</evidence>
<evidence type="ECO:0007744" key="38">
    <source>
    </source>
</evidence>
<evidence type="ECO:0007744" key="39">
    <source>
    </source>
</evidence>
<evidence type="ECO:0007744" key="40">
    <source>
    </source>
</evidence>
<evidence type="ECO:0007744" key="41">
    <source>
    </source>
</evidence>
<evidence type="ECO:0007744" key="42">
    <source>
    </source>
</evidence>
<evidence type="ECO:0007744" key="43">
    <source>
    </source>
</evidence>
<evidence type="ECO:0007829" key="44">
    <source>
        <dbReference type="PDB" id="3TT9"/>
    </source>
</evidence>
<accession>Q99959</accession>
<accession>A0AV37</accession>
<accession>B8QFA1</accession>
<accession>B8QGS6</accession>
<accession>B8QGS7</accession>
<accession>D3DUW9</accession>
<accession>Q4VC01</accession>
<accession>Q99960</accession>
<name>PKP2_HUMAN</name>
<comment type="function">
    <text evidence="1 2 12 17 21 22 23 24 27 28">A component of desmosome cell-cell junctions which are required for positive regulation of cellular adhesion (PubMed:25208567). Regulates focal adhesion turnover resulting in changes in focal adhesion size, cell adhesion and cell spreading, potentially via transcriptional modulation of beta-integrins (PubMed:23884246). Required to maintain gingival epithelial barrier function (PubMed:34368962). Important component of the desmosome that is also required for localization of desmosome component proteins such as DSC2, DSG2 and JUP to the desmosome cell-cell junction (PubMed:22781308, PubMed:25208567). Required for the formation of desmosome cell junctions in cardiomyocytes, thereby required for the correct formation of the heart, specifically trabeculation and formation of the atria walls (By similarity). Loss of desmosome cell junctions leads to mis-localization of DSP and DSG2 resulting in disruption of cell-cell adhesion and disordered intermediate filaments (By similarity). Modulates profibrotic gene expression in cardiomyocytes via regulation of DSP expression and subsequent activation of downstream TGFB1 and MAPK14/p38 MAPK signaling (By similarity). Required for cardiac sodium current propagation and electrical synchrony in cardiac myocytes, via ANK3 stabilization and modulation of SCN5A/Nav1.5 localization to cell-cell junctions (By similarity). Required for mitochondrial function, nuclear envelope integrity and positive regulation of SIRT3 transcription via maintaining DES localization at its nuclear envelope and cell tip anchoring points, and thereby preserving regulation of the transcriptional program (PubMed:35959657). Maintenance of nuclear envelope integrity protects against DNA damage and transcriptional dysregulation of genes, especially those involved in the electron transport chain, thereby preserving mitochondrial function and protecting against superoxide radical anion generation (PubMed:35959657). Binds single-stranded DNA (ssDNA) (PubMed:20613778). May regulate the localization of GJA1 to gap junctions in intercalated disks of the heart (PubMed:18662195). Involved in the inhibition of viral infection by influenza A viruses (IAV) (PubMed:28169297). Acts as a host restriction factor for IAV viral propagation, potentially via disrupting the interaction of IAV polymerase complex proteins (PubMed:28169297).</text>
</comment>
<comment type="subunit">
    <text evidence="1 5 6 7 8 11 19 21">Interacts with DSC2 (PubMed:21062920). Interacts with JUP (PubMed:11790773, PubMed:22781308). Interacts with KRT5/CK5, KRT8/CK8, KRT14/CK14, KRT18/CK18 and VIM (PubMed:10852826). Interacts (via N-terminus) with MARK3/C-TAK1 (PubMed:12941695). Interacts with DSP (PubMed:11790773, PubMed:22781308). Interacts with DSG1, DSG2 and DSG3 (PubMed:11790773). Interacts (via N-terminus) with CTNNB1 (PubMed:11790773). Interacts with CDH1 (PubMed:11790773). Interacts with the RNA polymerase III (Pol III) complex proteins POLR3A/RPC155, POLR3F/RPC39 and POLR3C/RPC82 (PubMed:11416169). Interacts with CTNNA3 (PubMed:17535849). Interacts (via N-terminus) with SCN5A/Nav1.5 (By similarity). Interacts with ANK3/ANKG and GJA1/CX43 (By similarity).</text>
</comment>
<comment type="subunit">
    <text evidence="24">(Microbial infection) Interacts (via N-terminus) with influenza A virus RNA polymerase subunit PB1 (via C-terminus); the interaction competitively inhibits the interaction between the subunits PB1 and PB2.</text>
</comment>
<comment type="interaction">
    <interactant intactId="EBI-702235">
        <id>Q99959</id>
    </interactant>
    <interactant intactId="EBI-742948">
        <id>Q5JR59</id>
        <label>MTUS2</label>
    </interactant>
    <organismsDiffer>false</organismsDiffer>
    <experiments>5</experiments>
</comment>
<comment type="interaction">
    <interactant intactId="EBI-702235">
        <id>Q99959</id>
    </interactant>
    <interactant intactId="EBI-928842">
        <id>Q9GZM8</id>
        <label>NDEL1</label>
    </interactant>
    <organismsDiffer>false</organismsDiffer>
    <experiments>4</experiments>
</comment>
<comment type="interaction">
    <interactant intactId="EBI-702235">
        <id>Q99959</id>
    </interactant>
    <interactant intactId="EBI-476295">
        <id>P31947</id>
        <label>SFN</label>
    </interactant>
    <organismsDiffer>false</organismsDiffer>
    <experiments>5</experiments>
</comment>
<comment type="interaction">
    <interactant intactId="EBI-702235">
        <id>Q99959</id>
    </interactant>
    <interactant intactId="EBI-356498">
        <id>P62258</id>
        <label>YWHAE</label>
    </interactant>
    <organismsDiffer>false</organismsDiffer>
    <experiments>5</experiments>
</comment>
<comment type="interaction">
    <interactant intactId="EBI-702235">
        <id>Q99959</id>
    </interactant>
    <interactant intactId="EBI-12577179">
        <id>C5E526</id>
        <label>PB1</label>
    </interactant>
    <organismsDiffer>true</organismsDiffer>
    <experiments>2</experiments>
</comment>
<comment type="interaction">
    <interactant intactId="EBI-702235">
        <id>Q99959</id>
    </interactant>
    <interactant intactId="EBI-2547514">
        <id>P03431</id>
        <label>PB1</label>
    </interactant>
    <organismsDiffer>true</organismsDiffer>
    <experiments>8</experiments>
</comment>
<comment type="interaction">
    <interactant intactId="EBI-702235">
        <id>Q99959</id>
    </interactant>
    <interactant intactId="EBI-6050669">
        <id>Q1K9H5</id>
        <label>PB1</label>
    </interactant>
    <organismsDiffer>true</organismsDiffer>
    <experiments>3</experiments>
</comment>
<comment type="interaction">
    <interactant intactId="EBI-702235">
        <id>Q99959</id>
    </interactant>
    <interactant intactId="EBI-12577201">
        <id>Q5EP37</id>
        <label>PB1</label>
    </interactant>
    <organismsDiffer>true</organismsDiffer>
    <experiments>2</experiments>
</comment>
<comment type="interaction">
    <interactant intactId="EBI-702235">
        <id>Q99959</id>
    </interactant>
    <interactant intactId="EBI-25475847">
        <id>PRO_0000449619</id>
        <label>rep</label>
        <dbReference type="UniProtKB" id="P0DTD1"/>
    </interactant>
    <organismsDiffer>true</organismsDiffer>
    <experiments>3</experiments>
</comment>
<comment type="interaction">
    <interactant intactId="EBI-10987518">
        <id>Q99959-2</id>
    </interactant>
    <interactant intactId="EBI-2880652">
        <id>Q08043</id>
        <label>ACTN3</label>
    </interactant>
    <organismsDiffer>false</organismsDiffer>
    <experiments>3</experiments>
</comment>
<comment type="interaction">
    <interactant intactId="EBI-10987518">
        <id>Q99959-2</id>
    </interactant>
    <interactant intactId="EBI-11530605">
        <id>Q9H257-2</id>
        <label>CARD9</label>
    </interactant>
    <organismsDiffer>false</organismsDiffer>
    <experiments>3</experiments>
</comment>
<comment type="interaction">
    <interactant intactId="EBI-10987518">
        <id>Q99959-2</id>
    </interactant>
    <interactant intactId="EBI-744556">
        <id>Q96HB5</id>
        <label>CCDC120</label>
    </interactant>
    <organismsDiffer>false</organismsDiffer>
    <experiments>3</experiments>
</comment>
<comment type="interaction">
    <interactant intactId="EBI-10987518">
        <id>Q99959-2</id>
    </interactant>
    <interactant intactId="EBI-11977221">
        <id>Q86Z20</id>
        <label>CCDC125</label>
    </interactant>
    <organismsDiffer>false</organismsDiffer>
    <experiments>3</experiments>
</comment>
<comment type="interaction">
    <interactant intactId="EBI-10987518">
        <id>Q99959-2</id>
    </interactant>
    <interactant intactId="EBI-10175300">
        <id>Q8TD31-3</id>
        <label>CCHCR1</label>
    </interactant>
    <organismsDiffer>false</organismsDiffer>
    <experiments>3</experiments>
</comment>
<comment type="interaction">
    <interactant intactId="EBI-10987518">
        <id>Q99959-2</id>
    </interactant>
    <interactant intactId="EBI-741101">
        <id>Q13643</id>
        <label>FHL3</label>
    </interactant>
    <organismsDiffer>false</organismsDiffer>
    <experiments>3</experiments>
</comment>
<comment type="interaction">
    <interactant intactId="EBI-10987518">
        <id>Q99959-2</id>
    </interactant>
    <interactant intactId="EBI-618309">
        <id>Q08379</id>
        <label>GOLGA2</label>
    </interactant>
    <organismsDiffer>false</organismsDiffer>
    <experiments>3</experiments>
</comment>
<comment type="interaction">
    <interactant intactId="EBI-10987518">
        <id>Q99959-2</id>
    </interactant>
    <interactant intactId="EBI-717919">
        <id>Q4V328</id>
        <label>GRIPAP1</label>
    </interactant>
    <organismsDiffer>false</organismsDiffer>
    <experiments>3</experiments>
</comment>
<comment type="interaction">
    <interactant intactId="EBI-10987518">
        <id>Q99959-2</id>
    </interactant>
    <interactant intactId="EBI-10961706">
        <id>Q96ED9-2</id>
        <label>HOOK2</label>
    </interactant>
    <organismsDiffer>false</organismsDiffer>
    <experiments>3</experiments>
</comment>
<comment type="interaction">
    <interactant intactId="EBI-10987518">
        <id>Q99959-2</id>
    </interactant>
    <interactant intactId="EBI-948001">
        <id>Q15323</id>
        <label>KRT31</label>
    </interactant>
    <organismsDiffer>false</organismsDiffer>
    <experiments>3</experiments>
</comment>
<comment type="interaction">
    <interactant intactId="EBI-10987518">
        <id>Q99959-2</id>
    </interactant>
    <interactant intactId="EBI-746778">
        <id>Q96A72</id>
        <label>MAGOHB</label>
    </interactant>
    <organismsDiffer>false</organismsDiffer>
    <experiments>3</experiments>
</comment>
<comment type="interaction">
    <interactant intactId="EBI-10987518">
        <id>Q99959-2</id>
    </interactant>
    <interactant intactId="EBI-11522433">
        <id>Q5JR59-3</id>
        <label>MTUS2</label>
    </interactant>
    <organismsDiffer>false</organismsDiffer>
    <experiments>6</experiments>
</comment>
<comment type="interaction">
    <interactant intactId="EBI-10987518">
        <id>Q99959-2</id>
    </interactant>
    <interactant intactId="EBI-10963850">
        <id>Q9NZQ3-3</id>
        <label>NCKIPSD</label>
    </interactant>
    <organismsDiffer>false</organismsDiffer>
    <experiments>3</experiments>
</comment>
<comment type="interaction">
    <interactant intactId="EBI-10987518">
        <id>Q99959-2</id>
    </interactant>
    <interactant intactId="EBI-928842">
        <id>Q9GZM8</id>
        <label>NDEL1</label>
    </interactant>
    <organismsDiffer>false</organismsDiffer>
    <experiments>3</experiments>
</comment>
<comment type="interaction">
    <interactant intactId="EBI-10987518">
        <id>Q99959-2</id>
    </interactant>
    <interactant intactId="EBI-14066006">
        <id>Q4G0R1</id>
        <label>PIBF1</label>
    </interactant>
    <organismsDiffer>false</organismsDiffer>
    <experiments>3</experiments>
</comment>
<comment type="interaction">
    <interactant intactId="EBI-10987518">
        <id>Q99959-2</id>
    </interactant>
    <interactant intactId="EBI-949255">
        <id>Q58EX7</id>
        <label>PLEKHG4</label>
    </interactant>
    <organismsDiffer>false</organismsDiffer>
    <experiments>3</experiments>
</comment>
<comment type="interaction">
    <interactant intactId="EBI-10987518">
        <id>Q99959-2</id>
    </interactant>
    <interactant intactId="EBI-447043">
        <id>Q15276</id>
        <label>RABEP1</label>
    </interactant>
    <organismsDiffer>false</organismsDiffer>
    <experiments>3</experiments>
</comment>
<comment type="interaction">
    <interactant intactId="EBI-10987518">
        <id>Q99959-2</id>
    </interactant>
    <interactant intactId="EBI-1378139">
        <id>Q9HAT0</id>
        <label>ROPN1</label>
    </interactant>
    <organismsDiffer>false</organismsDiffer>
    <experiments>3</experiments>
</comment>
<comment type="interaction">
    <interactant intactId="EBI-10987518">
        <id>Q99959-2</id>
    </interactant>
    <interactant intactId="EBI-375617">
        <id>P02549</id>
        <label>SPTA1</label>
    </interactant>
    <organismsDiffer>false</organismsDiffer>
    <experiments>3</experiments>
</comment>
<comment type="interaction">
    <interactant intactId="EBI-10987518">
        <id>Q99959-2</id>
    </interactant>
    <interactant intactId="EBI-750487">
        <id>Q8WW24</id>
        <label>TEKT4</label>
    </interactant>
    <organismsDiffer>false</organismsDiffer>
    <experiments>3</experiments>
</comment>
<comment type="subcellular location">
    <subcellularLocation>
        <location evidence="6 7 17 21 24 27">Nucleus</location>
    </subcellularLocation>
    <subcellularLocation>
        <location evidence="13 17 18 21 22 23 27">Cell junction</location>
        <location evidence="13 17 18 21 22 23 27">Desmosome</location>
    </subcellularLocation>
    <subcellularLocation>
        <location evidence="24">Cell junction</location>
    </subcellularLocation>
    <subcellularLocation>
        <location evidence="27">Cytoplasm</location>
    </subcellularLocation>
    <text evidence="2">Colocalizes with CTNNA3 and SCN5A/Nav1.5 at intercalated disks in the heart.</text>
</comment>
<comment type="alternative products">
    <event type="alternative splicing"/>
    <isoform>
        <id>Q99959-1</id>
        <name>2</name>
        <name>B</name>
        <sequence type="displayed"/>
    </isoform>
    <isoform>
        <id>Q99959-2</id>
        <name>1</name>
        <name>A</name>
        <sequence type="described" ref="VSP_006736"/>
    </isoform>
</comment>
<comment type="tissue specificity">
    <text evidence="4 12 21 24 27">Expressed at intercalated disks in the heart (at protein level) (PubMed:18662195). Expressed in gingival epithelial, endothelial and fibroblast cells (at protein level) (PubMed:34368962). Faintly expressed in tracheal epithelial cells (at protein level) (PubMed:28169297). Widely expressed. Found at desmosomal plaques in simple and stratified epithelia and in non-epithelial tissues such as myocardium and lymph node follicles. In most stratified epithelia found in the desmosomes of the basal cell layer and seems to be absent from suprabasal strata.</text>
</comment>
<comment type="tissue specificity">
    <text evidence="24">(Microbial infection) Abundantly expressed in tracheal epithelial cells following influenza A virus infection (at protein level).</text>
</comment>
<comment type="induction">
    <text evidence="27">(Microbial infection) mRNA levels increase in response to P.gingivalis challenge while protein expression decreases, suggesting proteasomal degradation in response to P.gingivalis infection of gingival epithelial cells.</text>
</comment>
<comment type="disease" evidence="10 12 13 14 15 16 21 25 26 28">
    <disease id="DI-01553">
        <name>Arrhythmogenic right ventricular dysplasia, familial, 9</name>
        <acronym>ARVD9</acronym>
        <description>A congenital heart disease characterized by infiltration of adipose and fibrous tissue into the right ventricle and loss of myocardial cells, resulting in ventricular and supraventricular arrhythmias.</description>
        <dbReference type="MIM" id="609040"/>
    </disease>
    <text>The disease is caused by variants affecting the gene represented in this entry.</text>
</comment>
<comment type="miscellaneous">
    <molecule>Isoform 2</molecule>
    <text>Undetected in heart.</text>
</comment>
<comment type="miscellaneous">
    <molecule>Isoform 1</molecule>
    <text evidence="33">Major isoform in heart.</text>
</comment>
<comment type="similarity">
    <text evidence="33">Belongs to the beta-catenin family.</text>
</comment>
<keyword id="KW-0002">3D-structure</keyword>
<keyword id="KW-0025">Alternative splicing</keyword>
<keyword id="KW-0122">Cardiomyopathy</keyword>
<keyword id="KW-0130">Cell adhesion</keyword>
<keyword id="KW-0965">Cell junction</keyword>
<keyword id="KW-0963">Cytoplasm</keyword>
<keyword id="KW-0225">Disease variant</keyword>
<keyword id="KW-0488">Methylation</keyword>
<keyword id="KW-0539">Nucleus</keyword>
<keyword id="KW-0597">Phosphoprotein</keyword>
<keyword id="KW-1267">Proteomics identification</keyword>
<keyword id="KW-1185">Reference proteome</keyword>
<keyword id="KW-0677">Repeat</keyword>
<reference key="1">
    <citation type="journal article" date="1996" name="J. Cell Biol.">
        <title>Plakophilins 2a and 2b: constitutive proteins of dual location in the karyoplasm and the desmosomal plaque.</title>
        <authorList>
            <person name="Mertens C."/>
            <person name="Kuhn C."/>
            <person name="Franke W.W."/>
        </authorList>
    </citation>
    <scope>NUCLEOTIDE SEQUENCE [MRNA] (ISOFORMS 1 AND 2)</scope>
    <scope>VARIANT PRO-366</scope>
</reference>
<reference key="2">
    <citation type="submission" date="2008-02" db="EMBL/GenBank/DDBJ databases">
        <title>Mutations in PKP2 gene involved in ARVC.</title>
        <authorList>
            <person name="Rampazzo A."/>
        </authorList>
    </citation>
    <scope>NUCLEOTIDE SEQUENCE [MRNA] (ISOFORM 2)</scope>
    <scope>VARIANTS SER-76; ASN-112 AND ILE-587</scope>
</reference>
<reference key="3">
    <citation type="journal article" date="2006" name="Nature">
        <title>The finished DNA sequence of human chromosome 12.</title>
        <authorList>
            <person name="Scherer S.E."/>
            <person name="Muzny D.M."/>
            <person name="Buhay C.J."/>
            <person name="Chen R."/>
            <person name="Cree A."/>
            <person name="Ding Y."/>
            <person name="Dugan-Rocha S."/>
            <person name="Gill R."/>
            <person name="Gunaratne P."/>
            <person name="Harris R.A."/>
            <person name="Hawes A.C."/>
            <person name="Hernandez J."/>
            <person name="Hodgson A.V."/>
            <person name="Hume J."/>
            <person name="Jackson A."/>
            <person name="Khan Z.M."/>
            <person name="Kovar-Smith C."/>
            <person name="Lewis L.R."/>
            <person name="Lozado R.J."/>
            <person name="Metzker M.L."/>
            <person name="Milosavljevic A."/>
            <person name="Miner G.R."/>
            <person name="Montgomery K.T."/>
            <person name="Morgan M.B."/>
            <person name="Nazareth L.V."/>
            <person name="Scott G."/>
            <person name="Sodergren E."/>
            <person name="Song X.-Z."/>
            <person name="Steffen D."/>
            <person name="Lovering R.C."/>
            <person name="Wheeler D.A."/>
            <person name="Worley K.C."/>
            <person name="Yuan Y."/>
            <person name="Zhang Z."/>
            <person name="Adams C.Q."/>
            <person name="Ansari-Lari M.A."/>
            <person name="Ayele M."/>
            <person name="Brown M.J."/>
            <person name="Chen G."/>
            <person name="Chen Z."/>
            <person name="Clerc-Blankenburg K.P."/>
            <person name="Davis C."/>
            <person name="Delgado O."/>
            <person name="Dinh H.H."/>
            <person name="Draper H."/>
            <person name="Gonzalez-Garay M.L."/>
            <person name="Havlak P."/>
            <person name="Jackson L.R."/>
            <person name="Jacob L.S."/>
            <person name="Kelly S.H."/>
            <person name="Li L."/>
            <person name="Li Z."/>
            <person name="Liu J."/>
            <person name="Liu W."/>
            <person name="Lu J."/>
            <person name="Maheshwari M."/>
            <person name="Nguyen B.-V."/>
            <person name="Okwuonu G.O."/>
            <person name="Pasternak S."/>
            <person name="Perez L.M."/>
            <person name="Plopper F.J.H."/>
            <person name="Santibanez J."/>
            <person name="Shen H."/>
            <person name="Tabor P.E."/>
            <person name="Verduzco D."/>
            <person name="Waldron L."/>
            <person name="Wang Q."/>
            <person name="Williams G.A."/>
            <person name="Zhang J."/>
            <person name="Zhou J."/>
            <person name="Allen C.C."/>
            <person name="Amin A.G."/>
            <person name="Anyalebechi V."/>
            <person name="Bailey M."/>
            <person name="Barbaria J.A."/>
            <person name="Bimage K.E."/>
            <person name="Bryant N.P."/>
            <person name="Burch P.E."/>
            <person name="Burkett C.E."/>
            <person name="Burrell K.L."/>
            <person name="Calderon E."/>
            <person name="Cardenas V."/>
            <person name="Carter K."/>
            <person name="Casias K."/>
            <person name="Cavazos I."/>
            <person name="Cavazos S.R."/>
            <person name="Ceasar H."/>
            <person name="Chacko J."/>
            <person name="Chan S.N."/>
            <person name="Chavez D."/>
            <person name="Christopoulos C."/>
            <person name="Chu J."/>
            <person name="Cockrell R."/>
            <person name="Cox C.D."/>
            <person name="Dang M."/>
            <person name="Dathorne S.R."/>
            <person name="David R."/>
            <person name="Davis C.M."/>
            <person name="Davy-Carroll L."/>
            <person name="Deshazo D.R."/>
            <person name="Donlin J.E."/>
            <person name="D'Souza L."/>
            <person name="Eaves K.A."/>
            <person name="Egan A."/>
            <person name="Emery-Cohen A.J."/>
            <person name="Escotto M."/>
            <person name="Flagg N."/>
            <person name="Forbes L.D."/>
            <person name="Gabisi A.M."/>
            <person name="Garza M."/>
            <person name="Hamilton C."/>
            <person name="Henderson N."/>
            <person name="Hernandez O."/>
            <person name="Hines S."/>
            <person name="Hogues M.E."/>
            <person name="Huang M."/>
            <person name="Idlebird D.G."/>
            <person name="Johnson R."/>
            <person name="Jolivet A."/>
            <person name="Jones S."/>
            <person name="Kagan R."/>
            <person name="King L.M."/>
            <person name="Leal B."/>
            <person name="Lebow H."/>
            <person name="Lee S."/>
            <person name="LeVan J.M."/>
            <person name="Lewis L.C."/>
            <person name="London P."/>
            <person name="Lorensuhewa L.M."/>
            <person name="Loulseged H."/>
            <person name="Lovett D.A."/>
            <person name="Lucier A."/>
            <person name="Lucier R.L."/>
            <person name="Ma J."/>
            <person name="Madu R.C."/>
            <person name="Mapua P."/>
            <person name="Martindale A.D."/>
            <person name="Martinez E."/>
            <person name="Massey E."/>
            <person name="Mawhiney S."/>
            <person name="Meador M.G."/>
            <person name="Mendez S."/>
            <person name="Mercado C."/>
            <person name="Mercado I.C."/>
            <person name="Merritt C.E."/>
            <person name="Miner Z.L."/>
            <person name="Minja E."/>
            <person name="Mitchell T."/>
            <person name="Mohabbat F."/>
            <person name="Mohabbat K."/>
            <person name="Montgomery B."/>
            <person name="Moore N."/>
            <person name="Morris S."/>
            <person name="Munidasa M."/>
            <person name="Ngo R.N."/>
            <person name="Nguyen N.B."/>
            <person name="Nickerson E."/>
            <person name="Nwaokelemeh O.O."/>
            <person name="Nwokenkwo S."/>
            <person name="Obregon M."/>
            <person name="Oguh M."/>
            <person name="Oragunye N."/>
            <person name="Oviedo R.J."/>
            <person name="Parish B.J."/>
            <person name="Parker D.N."/>
            <person name="Parrish J."/>
            <person name="Parks K.L."/>
            <person name="Paul H.A."/>
            <person name="Payton B.A."/>
            <person name="Perez A."/>
            <person name="Perrin W."/>
            <person name="Pickens A."/>
            <person name="Primus E.L."/>
            <person name="Pu L.-L."/>
            <person name="Puazo M."/>
            <person name="Quiles M.M."/>
            <person name="Quiroz J.B."/>
            <person name="Rabata D."/>
            <person name="Reeves K."/>
            <person name="Ruiz S.J."/>
            <person name="Shao H."/>
            <person name="Sisson I."/>
            <person name="Sonaike T."/>
            <person name="Sorelle R.P."/>
            <person name="Sutton A.E."/>
            <person name="Svatek A.F."/>
            <person name="Svetz L.A."/>
            <person name="Tamerisa K.S."/>
            <person name="Taylor T.R."/>
            <person name="Teague B."/>
            <person name="Thomas N."/>
            <person name="Thorn R.D."/>
            <person name="Trejos Z.Y."/>
            <person name="Trevino B.K."/>
            <person name="Ukegbu O.N."/>
            <person name="Urban J.B."/>
            <person name="Vasquez L.I."/>
            <person name="Vera V.A."/>
            <person name="Villasana D.M."/>
            <person name="Wang L."/>
            <person name="Ward-Moore S."/>
            <person name="Warren J.T."/>
            <person name="Wei X."/>
            <person name="White F."/>
            <person name="Williamson A.L."/>
            <person name="Wleczyk R."/>
            <person name="Wooden H.S."/>
            <person name="Wooden S.H."/>
            <person name="Yen J."/>
            <person name="Yoon L."/>
            <person name="Yoon V."/>
            <person name="Zorrilla S.E."/>
            <person name="Nelson D."/>
            <person name="Kucherlapati R."/>
            <person name="Weinstock G."/>
            <person name="Gibbs R.A."/>
        </authorList>
    </citation>
    <scope>NUCLEOTIDE SEQUENCE [LARGE SCALE GENOMIC DNA]</scope>
</reference>
<reference key="4">
    <citation type="submission" date="2005-09" db="EMBL/GenBank/DDBJ databases">
        <authorList>
            <person name="Mural R.J."/>
            <person name="Istrail S."/>
            <person name="Sutton G.G."/>
            <person name="Florea L."/>
            <person name="Halpern A.L."/>
            <person name="Mobarry C.M."/>
            <person name="Lippert R."/>
            <person name="Walenz B."/>
            <person name="Shatkay H."/>
            <person name="Dew I."/>
            <person name="Miller J.R."/>
            <person name="Flanigan M.J."/>
            <person name="Edwards N.J."/>
            <person name="Bolanos R."/>
            <person name="Fasulo D."/>
            <person name="Halldorsson B.V."/>
            <person name="Hannenhalli S."/>
            <person name="Turner R."/>
            <person name="Yooseph S."/>
            <person name="Lu F."/>
            <person name="Nusskern D.R."/>
            <person name="Shue B.C."/>
            <person name="Zheng X.H."/>
            <person name="Zhong F."/>
            <person name="Delcher A.L."/>
            <person name="Huson D.H."/>
            <person name="Kravitz S.A."/>
            <person name="Mouchard L."/>
            <person name="Reinert K."/>
            <person name="Remington K.A."/>
            <person name="Clark A.G."/>
            <person name="Waterman M.S."/>
            <person name="Eichler E.E."/>
            <person name="Adams M.D."/>
            <person name="Hunkapiller M.W."/>
            <person name="Myers E.W."/>
            <person name="Venter J.C."/>
        </authorList>
    </citation>
    <scope>NUCLEOTIDE SEQUENCE [LARGE SCALE GENOMIC DNA]</scope>
</reference>
<reference key="5">
    <citation type="journal article" date="2004" name="Genome Res.">
        <title>The status, quality, and expansion of the NIH full-length cDNA project: the Mammalian Gene Collection (MGC).</title>
        <authorList>
            <consortium name="The MGC Project Team"/>
        </authorList>
    </citation>
    <scope>NUCLEOTIDE SEQUENCE [LARGE SCALE MRNA] (ISOFORM 1)</scope>
    <scope>VARIANT PRO-366</scope>
    <source>
        <tissue>Brain</tissue>
        <tissue>Placenta</tissue>
    </source>
</reference>
<reference key="6">
    <citation type="journal article" date="1999" name="Differentiation">
        <title>Desmosomal plakophilin 2 as a differentiation marker in normal and malignant tissues.</title>
        <authorList>
            <person name="Mertens C."/>
            <person name="Kuhn C."/>
            <person name="Moll R."/>
            <person name="Schwetlick I."/>
            <person name="Franke W.W."/>
        </authorList>
    </citation>
    <scope>TISSUE SPECIFICITY</scope>
</reference>
<reference key="7">
    <citation type="journal article" date="2000" name="J. Cell Sci.">
        <title>Interaction of plakophilins with desmoplakin and intermediate filament proteins: an in vitro analysis.</title>
        <authorList>
            <person name="Hofmann I."/>
            <person name="Mertens C."/>
            <person name="Brettel M."/>
            <person name="Nimmrich V."/>
            <person name="Schnoelzer M."/>
            <person name="Herrmann H."/>
        </authorList>
    </citation>
    <scope>INTERACTION WITH KRT5; KRT8; KRT14; KRT18 AND VIM</scope>
</reference>
<reference key="8">
    <citation type="journal article" date="2001" name="Proc. Natl. Acad. Sci. U.S.A.">
        <title>Nuclear particles containing RNA polymerase III complexes associated with the junctional plaque protein plakophilin 2.</title>
        <authorList>
            <person name="Mertens C."/>
            <person name="Hofmann I."/>
            <person name="Wang Z."/>
            <person name="Teichmann M."/>
            <person name="Sepehri Chong S."/>
            <person name="Schnoelzer M."/>
            <person name="Franke W.W."/>
        </authorList>
    </citation>
    <scope>INTERACTION WITH POLR3A; POLR3F AND POLR3C</scope>
    <scope>SUBCELLULAR LOCATION</scope>
</reference>
<reference key="9">
    <citation type="journal article" date="2002" name="J. Biol. Chem.">
        <title>Protein binding and functional characterization of plakophilin 2. Evidence for its diverse roles in desmosomes and beta -catenin signaling.</title>
        <authorList>
            <person name="Chen X."/>
            <person name="Bonne S."/>
            <person name="Hatzfeld M."/>
            <person name="van Roy F."/>
            <person name="Green K.J."/>
        </authorList>
    </citation>
    <scope>INTERACTION WITH DSP; JUP; DSG1; DSG2; DSG3; CTNNB1 AND CDH1</scope>
    <scope>SUBCELLULAR LOCATION</scope>
</reference>
<reference key="10">
    <citation type="journal article" date="2003" name="EMBO J.">
        <title>Functional analysis of C-TAK1 substrate binding and identification of PKP2 as a new C-TAK1 substrate.</title>
        <authorList>
            <person name="Mueller J."/>
            <person name="Ritt D.A."/>
            <person name="Copeland T.D."/>
            <person name="Morrison D.K."/>
        </authorList>
    </citation>
    <scope>INTERACTION WITH MARK3</scope>
    <scope>PHOSPHORYLATION AT SER-82</scope>
    <scope>MUTAGENESIS OF SER-82 AND VAL-87</scope>
</reference>
<reference key="11">
    <citation type="journal article" date="2007" name="J. Cell Sci.">
        <title>A unique and specific interaction between alphaT-catenin and plakophilin-2 in the area composita, the mixed-type junctional structure of cardiac intercalated discs.</title>
        <authorList>
            <person name="Goossens S."/>
            <person name="Janssens B."/>
            <person name="Bonne S."/>
            <person name="De Rycke R."/>
            <person name="Braet F."/>
            <person name="van Hengel J."/>
            <person name="van Roy F."/>
        </authorList>
    </citation>
    <scope>INTERACTION WITH CTNNA3</scope>
</reference>
<reference key="12">
    <citation type="journal article" date="2007" name="Science">
        <title>ATM and ATR substrate analysis reveals extensive protein networks responsive to DNA damage.</title>
        <authorList>
            <person name="Matsuoka S."/>
            <person name="Ballif B.A."/>
            <person name="Smogorzewska A."/>
            <person name="McDonald E.R. III"/>
            <person name="Hurov K.E."/>
            <person name="Luo J."/>
            <person name="Bakalarski C.E."/>
            <person name="Zhao Z."/>
            <person name="Solimini N."/>
            <person name="Lerenthal Y."/>
            <person name="Shiloh Y."/>
            <person name="Gygi S.P."/>
            <person name="Elledge S.J."/>
        </authorList>
    </citation>
    <scope>PHOSPHORYLATION [LARGE SCALE ANALYSIS] AT SER-132 AND SER-169</scope>
    <scope>IDENTIFICATION BY MASS SPECTROMETRY [LARGE SCALE ANALYSIS]</scope>
    <source>
        <tissue>Embryonic kidney</tissue>
    </source>
</reference>
<reference key="13">
    <citation type="journal article" date="2008" name="Mol. Cell">
        <title>Kinase-selective enrichment enables quantitative phosphoproteomics of the kinome across the cell cycle.</title>
        <authorList>
            <person name="Daub H."/>
            <person name="Olsen J.V."/>
            <person name="Bairlein M."/>
            <person name="Gnad F."/>
            <person name="Oppermann F.S."/>
            <person name="Korner R."/>
            <person name="Greff Z."/>
            <person name="Keri G."/>
            <person name="Stemmann O."/>
            <person name="Mann M."/>
        </authorList>
    </citation>
    <scope>PHOSPHORYLATION [LARGE SCALE ANALYSIS] AT SER-151</scope>
    <scope>IDENTIFICATION BY MASS SPECTROMETRY [LARGE SCALE ANALYSIS]</scope>
    <source>
        <tissue>Cervix carcinoma</tissue>
    </source>
</reference>
<reference key="14">
    <citation type="journal article" date="2008" name="Proc. Natl. Acad. Sci. U.S.A.">
        <title>A quantitative atlas of mitotic phosphorylation.</title>
        <authorList>
            <person name="Dephoure N."/>
            <person name="Zhou C."/>
            <person name="Villen J."/>
            <person name="Beausoleil S.A."/>
            <person name="Bakalarski C.E."/>
            <person name="Elledge S.J."/>
            <person name="Gygi S.P."/>
        </authorList>
    </citation>
    <scope>PHOSPHORYLATION [LARGE SCALE ANALYSIS] AT SER-197 AND SER-329</scope>
    <scope>IDENTIFICATION BY MASS SPECTROMETRY [LARGE SCALE ANALYSIS]</scope>
    <source>
        <tissue>Cervix carcinoma</tissue>
    </source>
</reference>
<reference key="15">
    <citation type="journal article" date="2009" name="Cell Commun. Adhes.">
        <title>Arrhythmogenic right ventricular cardiomyopathy plakophilin-2 mutations disrupt desmosome assembly and stability.</title>
        <authorList>
            <person name="Hall C."/>
            <person name="Li S."/>
            <person name="Li H."/>
            <person name="Creason V."/>
            <person name="Wahl J.K. III"/>
        </authorList>
    </citation>
    <scope>INTERACTION WITH DSP</scope>
    <scope>SUBCELLULAR LOCATION</scope>
    <scope>CHARACTERIZATION OF VARIANTS ARVD9 LEU-59 AND LYS-62</scope>
</reference>
<reference key="16">
    <citation type="journal article" date="2009" name="Mol. Cell. Proteomics">
        <title>Large-scale proteomics analysis of the human kinome.</title>
        <authorList>
            <person name="Oppermann F.S."/>
            <person name="Gnad F."/>
            <person name="Olsen J.V."/>
            <person name="Hornberger R."/>
            <person name="Greff Z."/>
            <person name="Keri G."/>
            <person name="Mann M."/>
            <person name="Daub H."/>
        </authorList>
    </citation>
    <scope>PHOSPHORYLATION [LARGE SCALE ANALYSIS] AT SER-151</scope>
    <scope>IDENTIFICATION BY MASS SPECTROMETRY [LARGE SCALE ANALYSIS]</scope>
</reference>
<reference key="17">
    <citation type="journal article" date="2010" name="J. Invest. Dermatol.">
        <title>Plakophilin-1 localizes to the nucleus and interacts with single-stranded DNA.</title>
        <authorList>
            <person name="Sobolik-Delmaire T."/>
            <person name="Reddy R."/>
            <person name="Pashaj A."/>
            <person name="Roberts B.J."/>
            <person name="Wahl J.K. III"/>
        </authorList>
    </citation>
    <scope>FUNCTION</scope>
    <scope>SUBCELLULAR LOCATION</scope>
</reference>
<reference key="18">
    <citation type="journal article" date="2010" name="Sci. Signal.">
        <title>Quantitative phosphoproteomics reveals widespread full phosphorylation site occupancy during mitosis.</title>
        <authorList>
            <person name="Olsen J.V."/>
            <person name="Vermeulen M."/>
            <person name="Santamaria A."/>
            <person name="Kumar C."/>
            <person name="Miller M.L."/>
            <person name="Jensen L.J."/>
            <person name="Gnad F."/>
            <person name="Cox J."/>
            <person name="Jensen T.S."/>
            <person name="Nigg E.A."/>
            <person name="Brunak S."/>
            <person name="Mann M."/>
        </authorList>
    </citation>
    <scope>PHOSPHORYLATION [LARGE SCALE ANALYSIS] AT SER-44; SER-151; SER-154; SER-155; SER-251 AND SER-329</scope>
    <scope>IDENTIFICATION BY MASS SPECTROMETRY [LARGE SCALE ANALYSIS]</scope>
    <source>
        <tissue>Cervix carcinoma</tissue>
    </source>
</reference>
<reference key="19">
    <citation type="journal article" date="2011" name="Cardiovasc. Res.">
        <title>Mechanistic insights into arrhythmogenic right ventricular cardiomyopathy caused by desmocollin-2 mutations.</title>
        <authorList>
            <person name="Gehmlich K."/>
            <person name="Syrris P."/>
            <person name="Peskett E."/>
            <person name="Evans A."/>
            <person name="Ehler E."/>
            <person name="Asimaki A."/>
            <person name="Anastasakis A."/>
            <person name="Tsatsopoulou A."/>
            <person name="Vouliotis A.I."/>
            <person name="Stefanadis C."/>
            <person name="Saffitz J.E."/>
            <person name="Protonotarios N."/>
            <person name="McKenna W.J."/>
        </authorList>
    </citation>
    <scope>INTERACTION WITH DSC2</scope>
    <scope>VARIANT PRO-372</scope>
</reference>
<reference key="20">
    <citation type="journal article" date="2011" name="Cell. Mol. Life Sci.">
        <title>E-cadherin and plakoglobin recruit plakophilin3 to the cell border to initiate desmosome assembly.</title>
        <authorList>
            <person name="Gosavi P."/>
            <person name="Kundu S.T."/>
            <person name="Khapare N."/>
            <person name="Sehgal L."/>
            <person name="Karkhanis M.S."/>
            <person name="Dalal S.N."/>
        </authorList>
    </citation>
    <scope>SUBCELLULAR LOCATION</scope>
</reference>
<reference key="21">
    <citation type="journal article" date="2011" name="Heart">
        <title>Plakophilin 2A is the dominant isoform in human heart tissue: consequences for the genetic screening of arrhythmogenic right ventricular cardiomyopathy.</title>
        <authorList>
            <person name="Gandjbakhch E."/>
            <person name="Charron P."/>
            <person name="Fressart V."/>
            <person name="Lorin de la Grandmaison G."/>
            <person name="Simon F."/>
            <person name="Gary F."/>
            <person name="Vite A."/>
            <person name="Hainque B."/>
            <person name="Hidden-Lucet F."/>
            <person name="Komajda M."/>
            <person name="Villard E."/>
        </authorList>
    </citation>
    <scope>ALTERNATIVE SPLICING</scope>
    <scope>VARIANT TRP-490</scope>
</reference>
<reference key="22">
    <citation type="journal article" date="2011" name="Sci. Signal.">
        <title>System-wide temporal characterization of the proteome and phosphoproteome of human embryonic stem cell differentiation.</title>
        <authorList>
            <person name="Rigbolt K.T."/>
            <person name="Prokhorova T.A."/>
            <person name="Akimov V."/>
            <person name="Henningsen J."/>
            <person name="Johansen P.T."/>
            <person name="Kratchmarova I."/>
            <person name="Kassem M."/>
            <person name="Mann M."/>
            <person name="Olsen J.V."/>
            <person name="Blagoev B."/>
        </authorList>
    </citation>
    <scope>PHOSPHORYLATION [LARGE SCALE ANALYSIS] AT SER-151; SER-154; SER-155 AND SER-251</scope>
    <scope>IDENTIFICATION BY MASS SPECTROMETRY [LARGE SCALE ANALYSIS]</scope>
</reference>
<reference key="23">
    <citation type="journal article" date="2013" name="J. Proteome Res.">
        <title>Toward a comprehensive characterization of a human cancer cell phosphoproteome.</title>
        <authorList>
            <person name="Zhou H."/>
            <person name="Di Palma S."/>
            <person name="Preisinger C."/>
            <person name="Peng M."/>
            <person name="Polat A.N."/>
            <person name="Heck A.J."/>
            <person name="Mohammed S."/>
        </authorList>
    </citation>
    <scope>PHOSPHORYLATION [LARGE SCALE ANALYSIS] AT SER-135; SER-151; SER-154; SER-155; SER-197; SER-251; SER-294 AND SER-329</scope>
    <scope>IDENTIFICATION BY MASS SPECTROMETRY [LARGE SCALE ANALYSIS]</scope>
    <source>
        <tissue>Cervix carcinoma</tissue>
        <tissue>Erythroleukemia</tissue>
    </source>
</reference>
<reference key="24">
    <citation type="journal article" date="2014" name="J. Invest. Dermatol.">
        <title>Plakophilin 2 affects cell migration by modulating focal adhesion dynamics and integrin protein expression.</title>
        <authorList>
            <person name="Koetsier J.L."/>
            <person name="Amargo E.V."/>
            <person name="Todorovic V."/>
            <person name="Green K.J."/>
            <person name="Godsel L.M."/>
        </authorList>
    </citation>
    <scope>FUNCTION</scope>
    <scope>SUBCELLULAR LOCATION</scope>
</reference>
<reference key="25">
    <citation type="journal article" date="2014" name="J. Proteomics">
        <title>An enzyme assisted RP-RPLC approach for in-depth analysis of human liver phosphoproteome.</title>
        <authorList>
            <person name="Bian Y."/>
            <person name="Song C."/>
            <person name="Cheng K."/>
            <person name="Dong M."/>
            <person name="Wang F."/>
            <person name="Huang J."/>
            <person name="Sun D."/>
            <person name="Wang L."/>
            <person name="Ye M."/>
            <person name="Zou H."/>
        </authorList>
    </citation>
    <scope>PHOSPHORYLATION [LARGE SCALE ANALYSIS] AT SER-151; SER-155; SER-172; THR-177; SER-183; SER-251 AND SER-329</scope>
    <scope>IDENTIFICATION BY MASS SPECTROMETRY [LARGE SCALE ANALYSIS]</scope>
    <source>
        <tissue>Liver</tissue>
    </source>
</reference>
<reference key="26">
    <citation type="journal article" date="2014" name="Mol. Biol. Cell">
        <title>Plakophilin 3 mediates Rap1-dependent desmosome assembly and adherens junction maturation.</title>
        <authorList>
            <person name="Todorovic V."/>
            <person name="Koetsier J.L."/>
            <person name="Godsel L.M."/>
            <person name="Green K.J."/>
        </authorList>
    </citation>
    <scope>FUNCTION</scope>
    <scope>SUBCELLULAR LOCATION</scope>
</reference>
<reference key="27">
    <citation type="journal article" date="2014" name="Mol. Cell. Proteomics">
        <title>Immunoaffinity enrichment and mass spectrometry analysis of protein methylation.</title>
        <authorList>
            <person name="Guo A."/>
            <person name="Gu H."/>
            <person name="Zhou J."/>
            <person name="Mulhern D."/>
            <person name="Wang Y."/>
            <person name="Lee K.A."/>
            <person name="Yang V."/>
            <person name="Aguiar M."/>
            <person name="Kornhauser J."/>
            <person name="Jia X."/>
            <person name="Ren J."/>
            <person name="Beausoleil S.A."/>
            <person name="Silva J.C."/>
            <person name="Vemulapalli V."/>
            <person name="Bedford M.T."/>
            <person name="Comb M.J."/>
        </authorList>
    </citation>
    <scope>METHYLATION [LARGE SCALE ANALYSIS] AT ARG-46</scope>
    <scope>IDENTIFICATION BY MASS SPECTROMETRY [LARGE SCALE ANALYSIS]</scope>
    <source>
        <tissue>Colon carcinoma</tissue>
    </source>
</reference>
<reference key="28">
    <citation type="journal article" date="2017" name="Nat. Commun.">
        <title>Comparative influenza protein interactomes identify the role of plakophilin 2 in virus restriction.</title>
        <authorList>
            <person name="Wang L."/>
            <person name="Fu B."/>
            <person name="Li W."/>
            <person name="Patil G."/>
            <person name="Liu L."/>
            <person name="Dorf M.E."/>
            <person name="Li S."/>
        </authorList>
    </citation>
    <scope>FUNCTION</scope>
    <scope>INTERACTION WITH INFLUENZA A VIRUS PB1 (MICROBIAL INFECTION)</scope>
    <scope>SUBCELLULAR LOCATION</scope>
    <scope>TISSUE SPECIFICITY</scope>
    <scope>TISSUE SPECIFICITY (MICROBIAL INFECTION)</scope>
</reference>
<reference key="29">
    <citation type="journal article" date="2021" name="J. Periodont. Res.">
        <title>Impaired function of epithelial plakophilin-2 is associated with periodontal disease.</title>
        <authorList>
            <person name="Yu N."/>
            <person name="Zhang J."/>
            <person name="Phillips S.T."/>
            <person name="Offenbacher S."/>
            <person name="Zhang S."/>
        </authorList>
    </citation>
    <scope>FUNCTION</scope>
    <scope>SUBCELLULAR LOCATION</scope>
    <scope>TISSUE SPECIFICITY</scope>
    <scope>INDUCTION BY P.GINGIVALIS INFECTION (MICROBIAL INFECTION)</scope>
</reference>
<reference key="30">
    <citation type="journal article" date="2022" name="Circulation">
        <title>Loss of Nuclear Envelope Integrity and Increased Oxidant Production Cause DNA Damage in Adult Hearts Deficient in PKP2: A Molecular Substrate of ARVC.</title>
        <authorList>
            <person name="Perez-Hernandez M."/>
            <person name="van Opbergen C.J.M."/>
            <person name="Bagwan N."/>
            <person name="Vissing C.R."/>
            <person name="Marron-Linares G.M."/>
            <person name="Zhang M."/>
            <person name="Torres Vega E."/>
            <person name="Sorrentino A."/>
            <person name="Drici L."/>
            <person name="Sulek K."/>
            <person name="Zhai R."/>
            <person name="Hansen F.B."/>
            <person name="Christensen A.H."/>
            <person name="Boesgaard S."/>
            <person name="Gustafsson F."/>
            <person name="Rossing K."/>
            <person name="Small E.M."/>
            <person name="Davies M.J."/>
            <person name="Rothenberg E."/>
            <person name="Sato P.Y."/>
            <person name="Cerrone M."/>
            <person name="Jensen T.H.L."/>
            <person name="Qvortrup K."/>
            <person name="Bundgaard H."/>
            <person name="Delmar M."/>
            <person name="Lundby A."/>
        </authorList>
    </citation>
    <scope>FUNCTION</scope>
    <scope>INVOLVEMENT IN ARVD9</scope>
</reference>
<reference key="31">
    <citation type="journal article" date="2012" name="Circ. Cardiovasc. Genet.">
        <title>Molecular insights into arrhythmogenic right ventricular cardiomyopathy caused by plakophilin-2 missense mutations.</title>
        <authorList>
            <person name="Kirchner F."/>
            <person name="Schuetz A."/>
            <person name="Boldt L.H."/>
            <person name="Martens K."/>
            <person name="Dittmar G."/>
            <person name="Haverkamp W."/>
            <person name="Thierfelder L."/>
            <person name="Heinemann U."/>
            <person name="Gerull B."/>
        </authorList>
    </citation>
    <scope>X-RAY CRYSTALLOGRAPHY (1.55 ANGSTROMS) OF 346-620 OF VARIANT ARVD9 ARG-796</scope>
    <scope>VARIANT ARVD9 ARG-796</scope>
    <scope>CHARACTERIZATION OF VARIANTS ARVD9 PHE-615; GLN-654 AND ARG-796</scope>
    <scope>FUNCTION</scope>
    <scope>INTERACTION WITH JUP AND DSP</scope>
    <scope>SUBCELLULAR LOCATION</scope>
    <scope>TISSUE SPECIFICITY</scope>
</reference>
<reference key="32">
    <citation type="journal article" date="2004" name="Nat. Genet.">
        <title>Mutations in the desmosomal protein plakophilin-2 are common in arrhythmogenic right ventricular cardiomyopathy.</title>
        <authorList>
            <person name="Gerull B."/>
            <person name="Heuser A."/>
            <person name="Wichter T."/>
            <person name="Paul M."/>
            <person name="Basson C.T."/>
            <person name="McDermott D.A."/>
            <person name="Lerman B.B."/>
            <person name="Markowitz S.M."/>
            <person name="Ellinor P.T."/>
            <person name="MacRae C.A."/>
            <person name="Peters S."/>
            <person name="Grossmann K.S."/>
            <person name="Michely B."/>
            <person name="Sasse-Klaassen S."/>
            <person name="Birchmeier W."/>
            <person name="Dietz R."/>
            <person name="Breithardt G."/>
            <person name="Schulze-Bahr E."/>
            <person name="Thierfelder L."/>
        </authorList>
    </citation>
    <scope>VARIANTS ARVD9 PHE-615; GLN-654 AND ARG-796</scope>
    <scope>VARIANT PHE-140</scope>
</reference>
<reference key="33">
    <citation type="journal article" date="2009" name="Circ. Cardiovasc. Genet.">
        <title>Comprehensive desmosome mutation analysis in North Americans with arrhythmogenic right ventricular dysplasia/cardiomyopathy.</title>
        <authorList>
            <person name="den Haan A.D."/>
            <person name="Tan B.Y."/>
            <person name="Zikusoka M.N."/>
            <person name="Llado L.I."/>
            <person name="Jain R."/>
            <person name="Daly A."/>
            <person name="Tichnell C."/>
            <person name="James C."/>
            <person name="Amat-Alarcon N."/>
            <person name="Abraham T."/>
            <person name="Russell S.D."/>
            <person name="Bluemke D.A."/>
            <person name="Calkins H."/>
            <person name="Dalal D."/>
            <person name="Judge D.P."/>
        </authorList>
    </citation>
    <scope>VARIANTS ARVD9 SER-424 AND PHE-787</scope>
    <scope>VARIANTS ASN-26; ILE-70; PHE-140; VAL-195; SER-276; PRO-366; PRO-372; MET-526; SER-531 AND ILE-587</scope>
</reference>
<reference key="34">
    <citation type="journal article" date="2009" name="J. Cell. Mol. Med.">
        <title>Abnormal connexin43 in arrhythmogenic right ventricular cardiomyopathy caused by plakophilin-2 mutations.</title>
        <authorList>
            <person name="Fidler L.M."/>
            <person name="Wilson G.J."/>
            <person name="Liu F."/>
            <person name="Cui X."/>
            <person name="Scherer S.W."/>
            <person name="Taylor G.P."/>
            <person name="Hamilton R.M."/>
        </authorList>
    </citation>
    <scope>VARIANTS ARVD9 LYS-62 AND TRP-635</scope>
    <scope>CHARACTERIZATION OF VARIANTS ARVD9 LYS-62 AND TRP-635</scope>
    <scope>FUNCTION</scope>
    <scope>TISSUE SPECIFICITY</scope>
</reference>
<reference key="35">
    <citation type="journal article" date="2010" name="Cardiology">
        <title>Missense variants in plakophilin-2 in arrhythmogenic right ventricular cardiomyopathy patients -- disease-causing or innocent bystanders?</title>
        <authorList>
            <person name="Christensen A.H."/>
            <person name="Benn M."/>
            <person name="Tybjaerg-Hansen A."/>
            <person name="Haunso S."/>
            <person name="Svendsen J.H."/>
        </authorList>
    </citation>
    <scope>VARIANTS ARVD9 LYS-62; 79-ARG--ASP-881 DEL; ARG-489 AND VAL-673</scope>
    <scope>VARIANTS ASN-26; ASP-58; ILE-70; PHE-140; ALA-338; PRO-366; SER-531 AND ILE-587</scope>
</reference>
<reference key="36">
    <citation type="journal article" date="2010" name="Clin. Genet.">
        <title>Role of genetic testing in arrhythmogenic right ventricular cardiomyopathy/dysplasia.</title>
        <authorList>
            <person name="Barahona-Dussault C."/>
            <person name="Benito B."/>
            <person name="Campuzano O."/>
            <person name="Iglesias A."/>
            <person name="Leung T.L."/>
            <person name="Robb L."/>
            <person name="Talajic M."/>
            <person name="Brugada R."/>
        </authorList>
    </citation>
    <scope>VARIANTS ARVD9 LYS-137; GLY-169 AND CYS-631</scope>
    <scope>VARIANTS ILE-70; PRO-366 AND ILE-587</scope>
</reference>
<reference key="37">
    <citation type="journal article" date="2019" name="J. Am. Coll. Cardiol.">
        <title>Plakophilin-2 Truncation Variants in Patients Clinically Diagnosed With Catecholaminergic Polymorphic Ventricular Tachycardia and Decedents With Exercise-Associated Autopsy Negative Sudden Unexplained Death in the Young.</title>
        <authorList>
            <person name="Tester D.J."/>
            <person name="Ackerman J.P."/>
            <person name="Giudicessi J.R."/>
            <person name="Ackerman N.C."/>
            <person name="Cerrone M."/>
            <person name="Delmar M."/>
            <person name="Ackerman M.J."/>
        </authorList>
    </citation>
    <scope>VARIANT ARVD9 79-ARG--ASP-881 DEL</scope>
</reference>
<reference key="38">
    <citation type="journal article" date="2021" name="J. Appl. Genet.">
        <title>Pathogenic variants in plakophilin-2 gene (PKP2) are associated with better survival in arrhythmogenic right ventricular cardiomyopathy.</title>
        <authorList>
            <person name="Biernacka E.K."/>
            <person name="Borowiec K."/>
            <person name="Franaszczyk M."/>
            <person name="Szperl M."/>
            <person name="Rampazzo A."/>
            <person name="Wozniak O."/>
            <person name="Roszczynko M."/>
            <person name="Smigielski W."/>
            <person name="Lutynska A."/>
            <person name="Hoffman P."/>
        </authorList>
    </citation>
    <scope>VARIANTS ARVD9 413-ARG--ASP-881 DEL; 638-GLN--ASP-881 DEL AND VAL-673</scope>
</reference>
<protein>
    <recommendedName>
        <fullName evidence="34">Plakophilin-2</fullName>
    </recommendedName>
</protein>
<feature type="chain" id="PRO_0000064286" description="Plakophilin-2">
    <location>
        <begin position="1"/>
        <end position="881"/>
    </location>
</feature>
<feature type="repeat" description="ARM 1">
    <location>
        <begin position="341"/>
        <end position="383"/>
    </location>
</feature>
<feature type="repeat" description="ARM 2">
    <location>
        <begin position="385"/>
        <end position="424"/>
    </location>
</feature>
<feature type="repeat" description="ARM 3">
    <location>
        <begin position="427"/>
        <end position="467"/>
    </location>
</feature>
<feature type="repeat" description="ARM 4">
    <location>
        <begin position="571"/>
        <end position="616"/>
    </location>
</feature>
<feature type="repeat" description="ARM 5">
    <location>
        <begin position="671"/>
        <end position="711"/>
    </location>
</feature>
<feature type="repeat" description="ARM 6">
    <location>
        <begin position="719"/>
        <end position="758"/>
    </location>
</feature>
<feature type="repeat" description="ARM 7">
    <location>
        <begin position="763"/>
        <end position="804"/>
    </location>
</feature>
<feature type="repeat" description="ARM 8">
    <location>
        <begin position="807"/>
        <end position="849"/>
    </location>
</feature>
<feature type="region of interest" description="Required for binding to single-stranded DNA" evidence="17">
    <location>
        <begin position="1"/>
        <end position="360"/>
    </location>
</feature>
<feature type="region of interest" description="Required for interaction with influenza A virus RNA polymerase subunit PB1" evidence="24">
    <location>
        <begin position="1"/>
        <end position="348"/>
    </location>
</feature>
<feature type="region of interest" description="Disordered" evidence="3">
    <location>
        <begin position="282"/>
        <end position="314"/>
    </location>
</feature>
<feature type="compositionally biased region" description="Low complexity" evidence="3">
    <location>
        <begin position="286"/>
        <end position="297"/>
    </location>
</feature>
<feature type="modified residue" description="Phosphoserine" evidence="39">
    <location>
        <position position="44"/>
    </location>
</feature>
<feature type="modified residue" description="Omega-N-methylarginine" evidence="42">
    <location>
        <position position="46"/>
    </location>
</feature>
<feature type="modified residue" description="Phosphoserine; by MARK3" evidence="8">
    <location>
        <position position="82"/>
    </location>
</feature>
<feature type="modified residue" description="Phosphoserine" evidence="35">
    <location>
        <position position="132"/>
    </location>
</feature>
<feature type="modified residue" description="Phosphoserine" evidence="41">
    <location>
        <position position="135"/>
    </location>
</feature>
<feature type="modified residue" description="Phosphoserine" evidence="37 38 39 40 41 43">
    <location>
        <position position="151"/>
    </location>
</feature>
<feature type="modified residue" description="Phosphoserine" evidence="39 40 41">
    <location>
        <position position="154"/>
    </location>
</feature>
<feature type="modified residue" description="Phosphoserine" evidence="39 40 41 43">
    <location>
        <position position="155"/>
    </location>
</feature>
<feature type="modified residue" description="Phosphoserine" evidence="35">
    <location>
        <position position="169"/>
    </location>
</feature>
<feature type="modified residue" description="Phosphoserine" evidence="43">
    <location>
        <position position="172"/>
    </location>
</feature>
<feature type="modified residue" description="Phosphothreonine" evidence="43">
    <location>
        <position position="177"/>
    </location>
</feature>
<feature type="modified residue" description="Phosphoserine" evidence="43">
    <location>
        <position position="183"/>
    </location>
</feature>
<feature type="modified residue" description="Phosphoserine" evidence="36 41">
    <location>
        <position position="197"/>
    </location>
</feature>
<feature type="modified residue" description="Phosphoserine" evidence="39 40 41 43">
    <location>
        <position position="251"/>
    </location>
</feature>
<feature type="modified residue" description="Phosphoserine" evidence="41">
    <location>
        <position position="294"/>
    </location>
</feature>
<feature type="modified residue" description="Phosphoserine" evidence="36 39 41 43">
    <location>
        <position position="329"/>
    </location>
</feature>
<feature type="splice variant" id="VSP_006736" description="In isoform 1." evidence="31 32">
    <location>
        <begin position="460"/>
        <end position="503"/>
    </location>
</feature>
<feature type="sequence variant" id="VAR_065701" description="In dbSNP:rs143004808." evidence="15 16">
    <original>D</original>
    <variation>N</variation>
    <location>
        <position position="26"/>
    </location>
</feature>
<feature type="sequence variant" id="VAR_065702" description="In dbSNP:rs146708884." evidence="15">
    <original>E</original>
    <variation>D</variation>
    <location>
        <position position="58"/>
    </location>
</feature>
<feature type="sequence variant" id="VAR_080397" description="In ARVD9; uncertain significance; decreased interaction with DSP; dbSNP:rs730880179." evidence="13">
    <original>Q</original>
    <variation>L</variation>
    <location>
        <position position="59"/>
    </location>
</feature>
<feature type="sequence variant" id="VAR_065703" description="In ARVD9; uncertain significance; decreased protein stability; decreased interaction with DSP; does not affect subcellular location to the desmosomes. Loss of GJA1 organization at intercalated disks resulting in a punctate pattern of localization synonymous with gap junction proteins.; dbSNP:rs199601548." evidence="12 13 15">
    <original>Q</original>
    <variation>K</variation>
    <location>
        <position position="62"/>
    </location>
</feature>
<feature type="sequence variant" id="VAR_065704" description="In dbSNP:rs75909145." evidence="14 15 16">
    <original>S</original>
    <variation>I</variation>
    <location>
        <position position="70"/>
    </location>
</feature>
<feature type="sequence variant" id="VAR_070276" description="In dbSNP:rs1201224837." evidence="30">
    <original>N</original>
    <variation>S</variation>
    <location>
        <position position="76"/>
    </location>
</feature>
<feature type="sequence variant" id="VAR_080398" description="In ARVD9; uncertain significance." evidence="15 25">
    <location>
        <begin position="79"/>
        <end position="881"/>
    </location>
</feature>
<feature type="sequence variant" id="VAR_070277" evidence="30">
    <original>K</original>
    <variation>N</variation>
    <location>
        <position position="112"/>
    </location>
</feature>
<feature type="sequence variant" id="VAR_065705" description="In ARVD9; dbSNP:rs781739949." evidence="14">
    <original>E</original>
    <variation>K</variation>
    <location>
        <position position="137"/>
    </location>
</feature>
<feature type="sequence variant" id="VAR_021148" description="In dbSNP:rs150821281." evidence="10 15 16">
    <original>S</original>
    <variation>F</variation>
    <location>
        <position position="140"/>
    </location>
</feature>
<feature type="sequence variant" id="VAR_065706" description="In ARVD9; dbSNP:rs139139859." evidence="14">
    <original>S</original>
    <variation>G</variation>
    <location>
        <position position="169"/>
    </location>
</feature>
<feature type="sequence variant" id="VAR_065707" description="In dbSNP:rs1041783952." evidence="16">
    <original>A</original>
    <variation>V</variation>
    <location>
        <position position="195"/>
    </location>
</feature>
<feature type="sequence variant" id="VAR_065708" description="In dbSNP:rs201944276." evidence="16">
    <original>P</original>
    <variation>S</variation>
    <location>
        <position position="276"/>
    </location>
</feature>
<feature type="sequence variant" id="VAR_065709" description="In dbSNP:rs139851304." evidence="15">
    <original>T</original>
    <variation>A</variation>
    <location>
        <position position="338"/>
    </location>
</feature>
<feature type="sequence variant" id="VAR_063108" description="In dbSNP:rs1046116." evidence="9 14 15 16 29">
    <original>L</original>
    <variation>P</variation>
    <location>
        <position position="366"/>
    </location>
</feature>
<feature type="sequence variant" id="VAR_065710" description="In dbSNP:rs200586695." evidence="16 19">
    <original>A</original>
    <variation>P</variation>
    <location>
        <position position="372"/>
    </location>
</feature>
<feature type="sequence variant" id="VAR_090008" description="In ARVD9; uncertain significance; dbSNP:rs372827156." evidence="26">
    <location>
        <begin position="413"/>
        <end position="881"/>
    </location>
</feature>
<feature type="sequence variant" id="VAR_065711" description="In ARVD9; dbSNP:rs397516990." evidence="16">
    <original>F</original>
    <variation>S</variation>
    <location>
        <position position="424"/>
    </location>
</feature>
<feature type="sequence variant" id="VAR_065712" description="In ARVD9; uncertain significance; dbSNP:rs111450489." evidence="15">
    <original>G</original>
    <variation>R</variation>
    <location>
        <position position="489"/>
    </location>
</feature>
<feature type="sequence variant" id="VAR_070037" description="In dbSNP:rs149930872." evidence="20">
    <original>R</original>
    <variation>W</variation>
    <location>
        <position position="490"/>
    </location>
</feature>
<feature type="sequence variant" id="VAR_065713" description="In dbSNP:rs146882581." evidence="16">
    <original>T</original>
    <variation>M</variation>
    <location>
        <position position="526"/>
    </location>
</feature>
<feature type="sequence variant" id="VAR_065714" description="In dbSNP:rs147240502." evidence="15 16">
    <original>I</original>
    <variation>S</variation>
    <location>
        <position position="531"/>
    </location>
</feature>
<feature type="sequence variant" id="VAR_065715" description="In dbSNP:rs146102241." evidence="14 15 16 30">
    <original>V</original>
    <variation>I</variation>
    <location>
        <position position="587"/>
    </location>
</feature>
<feature type="sequence variant" id="VAR_021149" description="In ARVD9; impairs protein stability; dbSNP:rs1060501186." evidence="10 21">
    <original>S</original>
    <variation>F</variation>
    <location>
        <position position="615"/>
    </location>
</feature>
<feature type="sequence variant" id="VAR_065716" description="In ARVD9; dbSNP:rs1060501183." evidence="14">
    <original>Y</original>
    <variation>C</variation>
    <location>
        <position position="631"/>
    </location>
</feature>
<feature type="sequence variant" id="VAR_090009" description="In ARVD9; uncertain significance; loss of GJA1 organization at intercalated disks resulting in a punctate pattern of localization synonymous with gap junction proteins; dbSNP:rs778928536." evidence="12">
    <original>R</original>
    <variation>W</variation>
    <location>
        <position position="635"/>
    </location>
</feature>
<feature type="sequence variant" id="VAR_090010" description="In ARVD9; uncertain significance; dbSNP:rs397517012." evidence="26">
    <location>
        <begin position="638"/>
        <end position="881"/>
    </location>
</feature>
<feature type="sequence variant" id="VAR_021150" description="In ARVD9; impairs protein stability; dbSNP:rs1319690519." evidence="10 21">
    <original>K</original>
    <variation>Q</variation>
    <location>
        <position position="654"/>
    </location>
</feature>
<feature type="sequence variant" id="VAR_065717" description="In ARVD9; uncertain significance; dbSNP:rs1426480515." evidence="15 26">
    <original>G</original>
    <variation>V</variation>
    <location>
        <position position="673"/>
    </location>
</feature>
<feature type="sequence variant" id="VAR_065718" description="In ARVD9; dbSNP:rs1462688980." evidence="16">
    <original>L</original>
    <variation>F</variation>
    <location>
        <position position="787"/>
    </location>
</feature>
<feature type="sequence variant" id="VAR_021151" description="In ARVD9; impairs protein stability; dbSNP:rs794729098." evidence="10 21">
    <original>C</original>
    <variation>R</variation>
    <location>
        <position position="796"/>
    </location>
</feature>
<feature type="mutagenesis site" description="Abolishes phosphorylation by MARK3." evidence="8">
    <original>S</original>
    <variation>A</variation>
    <location>
        <position position="82"/>
    </location>
</feature>
<feature type="mutagenesis site" description="Reduces phosphorylation of S-82 by MARK3. Reduces interaction with MARK3." evidence="8">
    <original>V</original>
    <variation>A</variation>
    <location>
        <position position="87"/>
    </location>
</feature>
<feature type="helix" evidence="44">
    <location>
        <begin position="353"/>
        <end position="358"/>
    </location>
</feature>
<feature type="helix" evidence="44">
    <location>
        <begin position="367"/>
        <end position="381"/>
    </location>
</feature>
<feature type="helix" evidence="44">
    <location>
        <begin position="385"/>
        <end position="393"/>
    </location>
</feature>
<feature type="helix" evidence="44">
    <location>
        <begin position="396"/>
        <end position="402"/>
    </location>
</feature>
<feature type="helix" evidence="44">
    <location>
        <begin position="403"/>
        <end position="405"/>
    </location>
</feature>
<feature type="helix" evidence="44">
    <location>
        <begin position="409"/>
        <end position="423"/>
    </location>
</feature>
<feature type="helix" evidence="44">
    <location>
        <begin position="427"/>
        <end position="435"/>
    </location>
</feature>
<feature type="helix" evidence="44">
    <location>
        <begin position="438"/>
        <end position="448"/>
    </location>
</feature>
<feature type="helix" evidence="44">
    <location>
        <begin position="452"/>
        <end position="459"/>
    </location>
</feature>
<feature type="helix" evidence="44">
    <location>
        <begin position="504"/>
        <end position="510"/>
    </location>
</feature>
<feature type="helix" evidence="44">
    <location>
        <begin position="513"/>
        <end position="515"/>
    </location>
</feature>
<feature type="helix" evidence="44">
    <location>
        <begin position="516"/>
        <end position="530"/>
    </location>
</feature>
<feature type="helix" evidence="44">
    <location>
        <begin position="532"/>
        <end position="536"/>
    </location>
</feature>
<feature type="helix" evidence="44">
    <location>
        <begin position="540"/>
        <end position="542"/>
    </location>
</feature>
<feature type="helix" evidence="44">
    <location>
        <begin position="552"/>
        <end position="565"/>
    </location>
</feature>
<feature type="helix" evidence="44">
    <location>
        <begin position="570"/>
        <end position="577"/>
    </location>
</feature>
<feature type="helix" evidence="44">
    <location>
        <begin position="582"/>
        <end position="595"/>
    </location>
</feature>
<feature type="helix" evidence="44">
    <location>
        <begin position="602"/>
        <end position="614"/>
    </location>
</feature>
<organism>
    <name type="scientific">Homo sapiens</name>
    <name type="common">Human</name>
    <dbReference type="NCBI Taxonomy" id="9606"/>
    <lineage>
        <taxon>Eukaryota</taxon>
        <taxon>Metazoa</taxon>
        <taxon>Chordata</taxon>
        <taxon>Craniata</taxon>
        <taxon>Vertebrata</taxon>
        <taxon>Euteleostomi</taxon>
        <taxon>Mammalia</taxon>
        <taxon>Eutheria</taxon>
        <taxon>Euarchontoglires</taxon>
        <taxon>Primates</taxon>
        <taxon>Haplorrhini</taxon>
        <taxon>Catarrhini</taxon>
        <taxon>Hominidae</taxon>
        <taxon>Homo</taxon>
    </lineage>
</organism>
<sequence length="881" mass="97415">MAAPGAPAEYGYIRTVLGQQILGQLDSSSLALPSEAKLKLAGSSGRGGQTVKSLRIQEQVQQTLARKGRSSVGNGNLHRTSSVPEYVYNLHLVENDFVGGRSPVPKTYDMLKAGTTATYEGRWGRGTAQYSSQKSVEERSLRHPLRRLEISPDSSPERAHYTHSDYQYSQRSQAGHTLHHQESRRAALLVPPRYARSEIVGVSRAGTTSRQRHFDTYHRQYQHGSVSDTVFDSIPANPALLTYPRPGTSRSMGNLLEKENYLTAGLTVGQVRPLVPLQPVTQNRASRSSWHQSSFHSTRTLREAGPSVAVDSSGRRAHLTVGQAAAGGSGNLLTERSTFTDSQLGNADMEMTLERAVSMLEADHMLPSRISAAATFIQHECFQKSEARKRVNQLRGILKLLQLLKVQNEDVQRAVCGALRNLVFEDNDNKLEVAELNGVPRLLQVLKQTRDLETKKQITDHTVNLRSRNGWPGAVAHACNPSTLGGQGGRITRSGVRDQPDQHGLLWNLSSNDKLKNLMITEALLTLTENIIIPFSGWPEGDYPKANGLLDFDIFYNVTGCLRNMSSAGADGRKAMRRCDGLIDSLVHYVRGTIADYQPDDKATENCVCILHNLSYQLEAELPEKYSQNIYIQNRNIQTDNNKSIGCFGSRSRKVKEQYQDVPMPEEKSNPKGVEWLWHSIVIRMYLSLIAKSVRNYTQEASLGALQNLTAGSGPMPTSVAQTVVQKESGLQHTRKMLHVGDPSVKKTAISLLRNLSRNLSLQNEIAKETLPDLVSIIPDTVPSTDLLIETTASACYTLNNIIQNSYQNARDLLNTGGIQKIMAISAGDAYASNKASKAASVLLYSLWAHTELHHAYKKAQFKKTDFVNSRTAKAYHSLKD</sequence>
<proteinExistence type="evidence at protein level"/>